<sequence length="245" mass="27013">MRVDGREKIELRHIHIHTNYLKHPEGSVLIEVGDTKVICSATIEERVPPFMRGEGKGWVTAEYAMIPRATEQRTIRESSKGKVTGRTMEIQRLIGRALRAVVDLEALGERTVWIDCDVIQADGGTRTASITGAYVAMVLAFEKLLQAEKVSKIPVKDYLAATSVGIVEEQGVVLDLNYAEDSKADVDMNVIMTGKGQFVEVQGTGEEATFSRAQLNELLDAAEQGIFQLIDMQKEALGDIVSHIE</sequence>
<gene>
    <name evidence="1" type="primary">rph</name>
    <name type="ordered locus">BCB4264_A4601</name>
</gene>
<comment type="function">
    <text evidence="1">Phosphorolytic 3'-5' exoribonuclease that plays an important role in tRNA 3'-end maturation. Removes nucleotide residues following the 3'-CCA terminus of tRNAs; can also add nucleotides to the ends of RNA molecules by using nucleoside diphosphates as substrates, but this may not be physiologically important. Probably plays a role in initiation of 16S rRNA degradation (leading to ribosome degradation) during starvation.</text>
</comment>
<comment type="catalytic activity">
    <reaction evidence="1">
        <text>tRNA(n+1) + phosphate = tRNA(n) + a ribonucleoside 5'-diphosphate</text>
        <dbReference type="Rhea" id="RHEA:10628"/>
        <dbReference type="Rhea" id="RHEA-COMP:17343"/>
        <dbReference type="Rhea" id="RHEA-COMP:17344"/>
        <dbReference type="ChEBI" id="CHEBI:43474"/>
        <dbReference type="ChEBI" id="CHEBI:57930"/>
        <dbReference type="ChEBI" id="CHEBI:173114"/>
        <dbReference type="EC" id="2.7.7.56"/>
    </reaction>
</comment>
<comment type="subunit">
    <text evidence="1">Homohexameric ring arranged as a trimer of dimers.</text>
</comment>
<comment type="similarity">
    <text evidence="1">Belongs to the RNase PH family.</text>
</comment>
<accession>B7HEB3</accession>
<evidence type="ECO:0000255" key="1">
    <source>
        <dbReference type="HAMAP-Rule" id="MF_00564"/>
    </source>
</evidence>
<organism>
    <name type="scientific">Bacillus cereus (strain B4264)</name>
    <dbReference type="NCBI Taxonomy" id="405532"/>
    <lineage>
        <taxon>Bacteria</taxon>
        <taxon>Bacillati</taxon>
        <taxon>Bacillota</taxon>
        <taxon>Bacilli</taxon>
        <taxon>Bacillales</taxon>
        <taxon>Bacillaceae</taxon>
        <taxon>Bacillus</taxon>
        <taxon>Bacillus cereus group</taxon>
    </lineage>
</organism>
<reference key="1">
    <citation type="submission" date="2008-10" db="EMBL/GenBank/DDBJ databases">
        <title>Genome sequence of Bacillus cereus B4264.</title>
        <authorList>
            <person name="Dodson R.J."/>
            <person name="Durkin A.S."/>
            <person name="Rosovitz M.J."/>
            <person name="Rasko D.A."/>
            <person name="Hoffmaster A."/>
            <person name="Ravel J."/>
            <person name="Sutton G."/>
        </authorList>
    </citation>
    <scope>NUCLEOTIDE SEQUENCE [LARGE SCALE GENOMIC DNA]</scope>
    <source>
        <strain>B4264</strain>
    </source>
</reference>
<keyword id="KW-0548">Nucleotidyltransferase</keyword>
<keyword id="KW-0694">RNA-binding</keyword>
<keyword id="KW-0698">rRNA processing</keyword>
<keyword id="KW-0808">Transferase</keyword>
<keyword id="KW-0819">tRNA processing</keyword>
<keyword id="KW-0820">tRNA-binding</keyword>
<feature type="chain" id="PRO_1000129320" description="Ribonuclease PH">
    <location>
        <begin position="1"/>
        <end position="245"/>
    </location>
</feature>
<feature type="binding site" evidence="1">
    <location>
        <position position="86"/>
    </location>
    <ligand>
        <name>phosphate</name>
        <dbReference type="ChEBI" id="CHEBI:43474"/>
        <note>substrate</note>
    </ligand>
</feature>
<feature type="binding site" evidence="1">
    <location>
        <begin position="124"/>
        <end position="126"/>
    </location>
    <ligand>
        <name>phosphate</name>
        <dbReference type="ChEBI" id="CHEBI:43474"/>
        <note>substrate</note>
    </ligand>
</feature>
<proteinExistence type="inferred from homology"/>
<name>RNPH_BACC4</name>
<dbReference type="EC" id="2.7.7.56" evidence="1"/>
<dbReference type="EMBL" id="CP001176">
    <property type="protein sequence ID" value="ACK60037.1"/>
    <property type="molecule type" value="Genomic_DNA"/>
</dbReference>
<dbReference type="RefSeq" id="WP_001261761.1">
    <property type="nucleotide sequence ID" value="NC_011725.1"/>
</dbReference>
<dbReference type="SMR" id="B7HEB3"/>
<dbReference type="KEGG" id="bcb:BCB4264_A4601"/>
<dbReference type="HOGENOM" id="CLU_050858_0_0_9"/>
<dbReference type="Proteomes" id="UP000007096">
    <property type="component" value="Chromosome"/>
</dbReference>
<dbReference type="GO" id="GO:0000175">
    <property type="term" value="F:3'-5'-RNA exonuclease activity"/>
    <property type="evidence" value="ECO:0007669"/>
    <property type="project" value="UniProtKB-UniRule"/>
</dbReference>
<dbReference type="GO" id="GO:0000049">
    <property type="term" value="F:tRNA binding"/>
    <property type="evidence" value="ECO:0007669"/>
    <property type="project" value="UniProtKB-UniRule"/>
</dbReference>
<dbReference type="GO" id="GO:0009022">
    <property type="term" value="F:tRNA nucleotidyltransferase activity"/>
    <property type="evidence" value="ECO:0007669"/>
    <property type="project" value="UniProtKB-UniRule"/>
</dbReference>
<dbReference type="GO" id="GO:0016075">
    <property type="term" value="P:rRNA catabolic process"/>
    <property type="evidence" value="ECO:0007669"/>
    <property type="project" value="UniProtKB-UniRule"/>
</dbReference>
<dbReference type="GO" id="GO:0006364">
    <property type="term" value="P:rRNA processing"/>
    <property type="evidence" value="ECO:0007669"/>
    <property type="project" value="UniProtKB-KW"/>
</dbReference>
<dbReference type="GO" id="GO:0008033">
    <property type="term" value="P:tRNA processing"/>
    <property type="evidence" value="ECO:0007669"/>
    <property type="project" value="UniProtKB-UniRule"/>
</dbReference>
<dbReference type="CDD" id="cd11362">
    <property type="entry name" value="RNase_PH_bact"/>
    <property type="match status" value="1"/>
</dbReference>
<dbReference type="FunFam" id="3.30.230.70:FF:000003">
    <property type="entry name" value="Ribonuclease PH"/>
    <property type="match status" value="1"/>
</dbReference>
<dbReference type="Gene3D" id="3.30.230.70">
    <property type="entry name" value="GHMP Kinase, N-terminal domain"/>
    <property type="match status" value="1"/>
</dbReference>
<dbReference type="HAMAP" id="MF_00564">
    <property type="entry name" value="RNase_PH"/>
    <property type="match status" value="1"/>
</dbReference>
<dbReference type="InterPro" id="IPR001247">
    <property type="entry name" value="ExoRNase_PH_dom1"/>
</dbReference>
<dbReference type="InterPro" id="IPR015847">
    <property type="entry name" value="ExoRNase_PH_dom2"/>
</dbReference>
<dbReference type="InterPro" id="IPR036345">
    <property type="entry name" value="ExoRNase_PH_dom2_sf"/>
</dbReference>
<dbReference type="InterPro" id="IPR027408">
    <property type="entry name" value="PNPase/RNase_PH_dom_sf"/>
</dbReference>
<dbReference type="InterPro" id="IPR020568">
    <property type="entry name" value="Ribosomal_Su5_D2-typ_SF"/>
</dbReference>
<dbReference type="InterPro" id="IPR050080">
    <property type="entry name" value="RNase_PH"/>
</dbReference>
<dbReference type="InterPro" id="IPR002381">
    <property type="entry name" value="RNase_PH_bac-type"/>
</dbReference>
<dbReference type="InterPro" id="IPR018336">
    <property type="entry name" value="RNase_PH_CS"/>
</dbReference>
<dbReference type="NCBIfam" id="TIGR01966">
    <property type="entry name" value="RNasePH"/>
    <property type="match status" value="1"/>
</dbReference>
<dbReference type="PANTHER" id="PTHR11953">
    <property type="entry name" value="EXOSOME COMPLEX COMPONENT"/>
    <property type="match status" value="1"/>
</dbReference>
<dbReference type="PANTHER" id="PTHR11953:SF0">
    <property type="entry name" value="EXOSOME COMPLEX COMPONENT RRP41"/>
    <property type="match status" value="1"/>
</dbReference>
<dbReference type="Pfam" id="PF01138">
    <property type="entry name" value="RNase_PH"/>
    <property type="match status" value="1"/>
</dbReference>
<dbReference type="Pfam" id="PF03725">
    <property type="entry name" value="RNase_PH_C"/>
    <property type="match status" value="1"/>
</dbReference>
<dbReference type="SUPFAM" id="SSF55666">
    <property type="entry name" value="Ribonuclease PH domain 2-like"/>
    <property type="match status" value="1"/>
</dbReference>
<dbReference type="SUPFAM" id="SSF54211">
    <property type="entry name" value="Ribosomal protein S5 domain 2-like"/>
    <property type="match status" value="1"/>
</dbReference>
<dbReference type="PROSITE" id="PS01277">
    <property type="entry name" value="RIBONUCLEASE_PH"/>
    <property type="match status" value="1"/>
</dbReference>
<protein>
    <recommendedName>
        <fullName evidence="1">Ribonuclease PH</fullName>
        <shortName evidence="1">RNase PH</shortName>
        <ecNumber evidence="1">2.7.7.56</ecNumber>
    </recommendedName>
    <alternativeName>
        <fullName evidence="1">tRNA nucleotidyltransferase</fullName>
    </alternativeName>
</protein>